<sequence length="232" mass="25839">MGQKVHPNGIRLGIVKPWNSTWFANTKEFADNLDSDFKVRQFLTKELAKASVSRIVIERPAKSIRVTIHTARPGIVIGKKGEDVEKLRKVVADIAGVPAQINIAEVRKPELDAKLVADSITSQLERRVMFRRAMKRAVQNAMRLGAKGIKVEVSGRLGGAEIARTEWYREGRVPLHTLRADIDYNTSEAHTTYGVIGVKVWIFKGEILGGMAAVEQPEPAAQPKKQQRKGRK</sequence>
<gene>
    <name evidence="1" type="primary">rpsC</name>
    <name type="ordered locus">KPK_0405</name>
</gene>
<evidence type="ECO:0000255" key="1">
    <source>
        <dbReference type="HAMAP-Rule" id="MF_01309"/>
    </source>
</evidence>
<evidence type="ECO:0000305" key="2"/>
<organism>
    <name type="scientific">Klebsiella pneumoniae (strain 342)</name>
    <dbReference type="NCBI Taxonomy" id="507522"/>
    <lineage>
        <taxon>Bacteria</taxon>
        <taxon>Pseudomonadati</taxon>
        <taxon>Pseudomonadota</taxon>
        <taxon>Gammaproteobacteria</taxon>
        <taxon>Enterobacterales</taxon>
        <taxon>Enterobacteriaceae</taxon>
        <taxon>Klebsiella/Raoultella group</taxon>
        <taxon>Klebsiella</taxon>
        <taxon>Klebsiella pneumoniae complex</taxon>
    </lineage>
</organism>
<proteinExistence type="inferred from homology"/>
<protein>
    <recommendedName>
        <fullName evidence="1">Small ribosomal subunit protein uS3</fullName>
    </recommendedName>
    <alternativeName>
        <fullName evidence="2">30S ribosomal protein S3</fullName>
    </alternativeName>
</protein>
<reference key="1">
    <citation type="journal article" date="2008" name="PLoS Genet.">
        <title>Complete genome sequence of the N2-fixing broad host range endophyte Klebsiella pneumoniae 342 and virulence predictions verified in mice.</title>
        <authorList>
            <person name="Fouts D.E."/>
            <person name="Tyler H.L."/>
            <person name="DeBoy R.T."/>
            <person name="Daugherty S."/>
            <person name="Ren Q."/>
            <person name="Badger J.H."/>
            <person name="Durkin A.S."/>
            <person name="Huot H."/>
            <person name="Shrivastava S."/>
            <person name="Kothari S."/>
            <person name="Dodson R.J."/>
            <person name="Mohamoud Y."/>
            <person name="Khouri H."/>
            <person name="Roesch L.F.W."/>
            <person name="Krogfelt K.A."/>
            <person name="Struve C."/>
            <person name="Triplett E.W."/>
            <person name="Methe B.A."/>
        </authorList>
    </citation>
    <scope>NUCLEOTIDE SEQUENCE [LARGE SCALE GENOMIC DNA]</scope>
    <source>
        <strain>342</strain>
    </source>
</reference>
<accession>B5XNA0</accession>
<keyword id="KW-0687">Ribonucleoprotein</keyword>
<keyword id="KW-0689">Ribosomal protein</keyword>
<keyword id="KW-0694">RNA-binding</keyword>
<keyword id="KW-0699">rRNA-binding</keyword>
<comment type="function">
    <text evidence="1">Binds the lower part of the 30S subunit head. Binds mRNA in the 70S ribosome, positioning it for translation.</text>
</comment>
<comment type="subunit">
    <text evidence="1">Part of the 30S ribosomal subunit. Forms a tight complex with proteins S10 and S14.</text>
</comment>
<comment type="similarity">
    <text evidence="1">Belongs to the universal ribosomal protein uS3 family.</text>
</comment>
<feature type="chain" id="PRO_1000140980" description="Small ribosomal subunit protein uS3">
    <location>
        <begin position="1"/>
        <end position="232"/>
    </location>
</feature>
<feature type="domain" description="KH type-2" evidence="1">
    <location>
        <begin position="39"/>
        <end position="107"/>
    </location>
</feature>
<name>RS3_KLEP3</name>
<dbReference type="EMBL" id="CP000964">
    <property type="protein sequence ID" value="ACI11578.1"/>
    <property type="molecule type" value="Genomic_DNA"/>
</dbReference>
<dbReference type="SMR" id="B5XNA0"/>
<dbReference type="KEGG" id="kpe:KPK_0405"/>
<dbReference type="HOGENOM" id="CLU_058591_0_2_6"/>
<dbReference type="Proteomes" id="UP000001734">
    <property type="component" value="Chromosome"/>
</dbReference>
<dbReference type="GO" id="GO:0022627">
    <property type="term" value="C:cytosolic small ribosomal subunit"/>
    <property type="evidence" value="ECO:0007669"/>
    <property type="project" value="TreeGrafter"/>
</dbReference>
<dbReference type="GO" id="GO:0003729">
    <property type="term" value="F:mRNA binding"/>
    <property type="evidence" value="ECO:0007669"/>
    <property type="project" value="UniProtKB-UniRule"/>
</dbReference>
<dbReference type="GO" id="GO:0019843">
    <property type="term" value="F:rRNA binding"/>
    <property type="evidence" value="ECO:0007669"/>
    <property type="project" value="UniProtKB-UniRule"/>
</dbReference>
<dbReference type="GO" id="GO:0003735">
    <property type="term" value="F:structural constituent of ribosome"/>
    <property type="evidence" value="ECO:0007669"/>
    <property type="project" value="InterPro"/>
</dbReference>
<dbReference type="GO" id="GO:0006412">
    <property type="term" value="P:translation"/>
    <property type="evidence" value="ECO:0007669"/>
    <property type="project" value="UniProtKB-UniRule"/>
</dbReference>
<dbReference type="CDD" id="cd02412">
    <property type="entry name" value="KH-II_30S_S3"/>
    <property type="match status" value="1"/>
</dbReference>
<dbReference type="FunFam" id="3.30.1140.32:FF:000001">
    <property type="entry name" value="30S ribosomal protein S3"/>
    <property type="match status" value="1"/>
</dbReference>
<dbReference type="FunFam" id="3.30.300.20:FF:000001">
    <property type="entry name" value="30S ribosomal protein S3"/>
    <property type="match status" value="1"/>
</dbReference>
<dbReference type="Gene3D" id="3.30.300.20">
    <property type="match status" value="1"/>
</dbReference>
<dbReference type="Gene3D" id="3.30.1140.32">
    <property type="entry name" value="Ribosomal protein S3, C-terminal domain"/>
    <property type="match status" value="1"/>
</dbReference>
<dbReference type="HAMAP" id="MF_01309_B">
    <property type="entry name" value="Ribosomal_uS3_B"/>
    <property type="match status" value="1"/>
</dbReference>
<dbReference type="InterPro" id="IPR004087">
    <property type="entry name" value="KH_dom"/>
</dbReference>
<dbReference type="InterPro" id="IPR015946">
    <property type="entry name" value="KH_dom-like_a/b"/>
</dbReference>
<dbReference type="InterPro" id="IPR004044">
    <property type="entry name" value="KH_dom_type_2"/>
</dbReference>
<dbReference type="InterPro" id="IPR009019">
    <property type="entry name" value="KH_sf_prok-type"/>
</dbReference>
<dbReference type="InterPro" id="IPR036419">
    <property type="entry name" value="Ribosomal_S3_C_sf"/>
</dbReference>
<dbReference type="InterPro" id="IPR005704">
    <property type="entry name" value="Ribosomal_uS3_bac-typ"/>
</dbReference>
<dbReference type="InterPro" id="IPR001351">
    <property type="entry name" value="Ribosomal_uS3_C"/>
</dbReference>
<dbReference type="InterPro" id="IPR018280">
    <property type="entry name" value="Ribosomal_uS3_CS"/>
</dbReference>
<dbReference type="NCBIfam" id="TIGR01009">
    <property type="entry name" value="rpsC_bact"/>
    <property type="match status" value="1"/>
</dbReference>
<dbReference type="PANTHER" id="PTHR11760">
    <property type="entry name" value="30S/40S RIBOSOMAL PROTEIN S3"/>
    <property type="match status" value="1"/>
</dbReference>
<dbReference type="PANTHER" id="PTHR11760:SF19">
    <property type="entry name" value="SMALL RIBOSOMAL SUBUNIT PROTEIN US3C"/>
    <property type="match status" value="1"/>
</dbReference>
<dbReference type="Pfam" id="PF07650">
    <property type="entry name" value="KH_2"/>
    <property type="match status" value="1"/>
</dbReference>
<dbReference type="Pfam" id="PF00189">
    <property type="entry name" value="Ribosomal_S3_C"/>
    <property type="match status" value="1"/>
</dbReference>
<dbReference type="SMART" id="SM00322">
    <property type="entry name" value="KH"/>
    <property type="match status" value="1"/>
</dbReference>
<dbReference type="SUPFAM" id="SSF54814">
    <property type="entry name" value="Prokaryotic type KH domain (KH-domain type II)"/>
    <property type="match status" value="1"/>
</dbReference>
<dbReference type="SUPFAM" id="SSF54821">
    <property type="entry name" value="Ribosomal protein S3 C-terminal domain"/>
    <property type="match status" value="1"/>
</dbReference>
<dbReference type="PROSITE" id="PS50823">
    <property type="entry name" value="KH_TYPE_2"/>
    <property type="match status" value="1"/>
</dbReference>
<dbReference type="PROSITE" id="PS00548">
    <property type="entry name" value="RIBOSOMAL_S3"/>
    <property type="match status" value="1"/>
</dbReference>